<sequence length="291" mass="31118">MATLASSTKPQKWVSLIAGGVAGGVEAASTYPFEYAKTRVQLLRTSKSTPSNPLRLIFTVAQQEGVGALYTGCSTLIIGTTAKAAVRFVSYDTIKNSLSDERGSLSPARGIVAGVVAGATESVLAVTPTERIKTALIDDAKNARQFRSSLHATQVLVRTHGLRELYRGLVSTTLKQSATSAVRMGTYNILKESFKAHDIPPTLFTTFCMGALAGVVTVYATQPFDTIKTRAQGVQGAGLVEAIRNIQSDYGVRGFWKGSSMRLGRLLLSGGIVFSVYEKMTYLLHSRAGVE</sequence>
<reference key="1">
    <citation type="journal article" date="2011" name="Genome Res.">
        <title>Comparative genomics of citric-acid-producing Aspergillus niger ATCC 1015 versus enzyme-producing CBS 513.88.</title>
        <authorList>
            <person name="Andersen M.R."/>
            <person name="Salazar M.P."/>
            <person name="Schaap P.J."/>
            <person name="van de Vondervoort P.J.I."/>
            <person name="Culley D."/>
            <person name="Thykaer J."/>
            <person name="Frisvad J.C."/>
            <person name="Nielsen K.F."/>
            <person name="Albang R."/>
            <person name="Albermann K."/>
            <person name="Berka R.M."/>
            <person name="Braus G.H."/>
            <person name="Braus-Stromeyer S.A."/>
            <person name="Corrochano L.M."/>
            <person name="Dai Z."/>
            <person name="van Dijck P.W.M."/>
            <person name="Hofmann G."/>
            <person name="Lasure L.L."/>
            <person name="Magnuson J.K."/>
            <person name="Menke H."/>
            <person name="Meijer M."/>
            <person name="Meijer S.L."/>
            <person name="Nielsen J.B."/>
            <person name="Nielsen M.L."/>
            <person name="van Ooyen A.J.J."/>
            <person name="Pel H.J."/>
            <person name="Poulsen L."/>
            <person name="Samson R.A."/>
            <person name="Stam H."/>
            <person name="Tsang A."/>
            <person name="van den Brink J.M."/>
            <person name="Atkins A."/>
            <person name="Aerts A."/>
            <person name="Shapiro H."/>
            <person name="Pangilinan J."/>
            <person name="Salamov A."/>
            <person name="Lou Y."/>
            <person name="Lindquist E."/>
            <person name="Lucas S."/>
            <person name="Grimwood J."/>
            <person name="Grigoriev I.V."/>
            <person name="Kubicek C.P."/>
            <person name="Martinez D."/>
            <person name="van Peij N.N.M.E."/>
            <person name="Roubos J.A."/>
            <person name="Nielsen J."/>
            <person name="Baker S.E."/>
        </authorList>
    </citation>
    <scope>NUCLEOTIDE SEQUENCE [LARGE SCALE GENOMIC DNA]</scope>
    <source>
        <strain>ATCC 1015 / CBS 113.46 / FGSC A1144 / LSHB Ac4 / NCTC 3858a / NRRL 328 / USDA 3528.7</strain>
    </source>
</reference>
<reference key="2">
    <citation type="journal article" date="2022" name="Front. Microbiol.">
        <title>Identification and genetic characterization of mitochondrial citrate transporters in Aspergillus niger.</title>
        <authorList>
            <person name="Cao W."/>
            <person name="Zhang L."/>
            <person name="Wu L."/>
            <person name="Zhang M."/>
            <person name="Liu J."/>
            <person name="Xie Z."/>
            <person name="Liu H."/>
        </authorList>
    </citation>
    <scope>FUNCTION</scope>
    <scope>DISRUPTION PHENOTYPE</scope>
    <scope>TRANSPORT ACTIVITY</scope>
</reference>
<feature type="chain" id="PRO_0000457329" description="Mitochondrial citrate transporter B">
    <location>
        <begin position="1"/>
        <end position="291"/>
    </location>
</feature>
<feature type="transmembrane region" description="Helical; Name=1" evidence="1">
    <location>
        <begin position="16"/>
        <end position="36"/>
    </location>
</feature>
<feature type="transmembrane region" description="Helical; Name=2" evidence="1">
    <location>
        <begin position="74"/>
        <end position="94"/>
    </location>
</feature>
<feature type="transmembrane region" description="Helical; Name=3" evidence="1">
    <location>
        <begin position="112"/>
        <end position="132"/>
    </location>
</feature>
<feature type="transmembrane region" description="Helical; Name=4" evidence="1">
    <location>
        <begin position="172"/>
        <end position="192"/>
    </location>
</feature>
<feature type="transmembrane region" description="Helical; Name=5" evidence="1">
    <location>
        <begin position="203"/>
        <end position="220"/>
    </location>
</feature>
<feature type="transmembrane region" description="Helical; Name=6" evidence="1">
    <location>
        <begin position="255"/>
        <end position="276"/>
    </location>
</feature>
<feature type="repeat" description="Solcar 1" evidence="2">
    <location>
        <begin position="10"/>
        <end position="97"/>
    </location>
</feature>
<feature type="repeat" description="Solcar 2" evidence="2">
    <location>
        <begin position="105"/>
        <end position="193"/>
    </location>
</feature>
<feature type="repeat" description="Solcar 3" evidence="2">
    <location>
        <begin position="201"/>
        <end position="283"/>
    </location>
</feature>
<dbReference type="EC" id="7.-.-.-" evidence="3"/>
<dbReference type="EMBL" id="ACJE01000020">
    <property type="protein sequence ID" value="EHA18756.1"/>
    <property type="molecule type" value="Genomic_DNA"/>
</dbReference>
<dbReference type="SMR" id="G3YD89"/>
<dbReference type="STRING" id="380704.G3YD89"/>
<dbReference type="HOGENOM" id="CLU_015166_5_1_1"/>
<dbReference type="OrthoDB" id="69927at5052"/>
<dbReference type="Proteomes" id="UP000009038">
    <property type="component" value="Unassembled WGS sequence"/>
</dbReference>
<dbReference type="GO" id="GO:0005743">
    <property type="term" value="C:mitochondrial inner membrane"/>
    <property type="evidence" value="ECO:0007669"/>
    <property type="project" value="UniProtKB-SubCell"/>
</dbReference>
<dbReference type="GO" id="GO:0071913">
    <property type="term" value="F:citrate secondary active transmembrane transporter activity"/>
    <property type="evidence" value="ECO:0007669"/>
    <property type="project" value="TreeGrafter"/>
</dbReference>
<dbReference type="GO" id="GO:0006843">
    <property type="term" value="P:mitochondrial citrate transmembrane transport"/>
    <property type="evidence" value="ECO:0007669"/>
    <property type="project" value="TreeGrafter"/>
</dbReference>
<dbReference type="Gene3D" id="1.50.40.10">
    <property type="entry name" value="Mitochondrial carrier domain"/>
    <property type="match status" value="1"/>
</dbReference>
<dbReference type="InterPro" id="IPR002067">
    <property type="entry name" value="Mit_carrier"/>
</dbReference>
<dbReference type="InterPro" id="IPR018108">
    <property type="entry name" value="Mitochondrial_sb/sol_carrier"/>
</dbReference>
<dbReference type="InterPro" id="IPR023395">
    <property type="entry name" value="Mt_carrier_dom_sf"/>
</dbReference>
<dbReference type="InterPro" id="IPR049563">
    <property type="entry name" value="TXTP-like"/>
</dbReference>
<dbReference type="PANTHER" id="PTHR45788">
    <property type="entry name" value="SUCCINATE/FUMARATE MITOCHONDRIAL TRANSPORTER-RELATED"/>
    <property type="match status" value="1"/>
</dbReference>
<dbReference type="PANTHER" id="PTHR45788:SF3">
    <property type="entry name" value="TRICARBOXYLATE TRANSPORT PROTEIN"/>
    <property type="match status" value="1"/>
</dbReference>
<dbReference type="Pfam" id="PF00153">
    <property type="entry name" value="Mito_carr"/>
    <property type="match status" value="3"/>
</dbReference>
<dbReference type="PRINTS" id="PR00926">
    <property type="entry name" value="MITOCARRIER"/>
</dbReference>
<dbReference type="SUPFAM" id="SSF103506">
    <property type="entry name" value="Mitochondrial carrier"/>
    <property type="match status" value="1"/>
</dbReference>
<dbReference type="PROSITE" id="PS50920">
    <property type="entry name" value="SOLCAR"/>
    <property type="match status" value="3"/>
</dbReference>
<gene>
    <name evidence="4" type="primary">ctpB</name>
    <name type="ORF">ASPNIDRAFT_42578</name>
</gene>
<keyword id="KW-0472">Membrane</keyword>
<keyword id="KW-0496">Mitochondrion</keyword>
<keyword id="KW-0999">Mitochondrion inner membrane</keyword>
<keyword id="KW-0677">Repeat</keyword>
<keyword id="KW-1278">Translocase</keyword>
<keyword id="KW-0812">Transmembrane</keyword>
<keyword id="KW-1133">Transmembrane helix</keyword>
<keyword id="KW-0813">Transport</keyword>
<name>CTPB_ASPNA</name>
<protein>
    <recommendedName>
        <fullName evidence="4">Mitochondrial citrate transporter B</fullName>
        <ecNumber evidence="3">7.-.-.-</ecNumber>
    </recommendedName>
</protein>
<comment type="function">
    <text evidence="3">Mitochondrial transporter that mediates citrate export from mitochondria to cytoplasm (PubMed:36177470). Both ctpA, ctpB, and ctpD play important roles in citric acid transport across the mitochondrial membrane and function in a redundant manner (PubMed:36177470).</text>
</comment>
<comment type="catalytic activity">
    <reaction evidence="3">
        <text>citrate(in) + H(+)(in) = citrate(out) + H(+)(out)</text>
        <dbReference type="Rhea" id="RHEA:32123"/>
        <dbReference type="ChEBI" id="CHEBI:15378"/>
        <dbReference type="ChEBI" id="CHEBI:16947"/>
    </reaction>
</comment>
<comment type="subcellular location">
    <subcellularLocation>
        <location evidence="6">Mitochondrion inner membrane</location>
        <topology evidence="1">Multi-pass membrane protein</topology>
    </subcellularLocation>
</comment>
<comment type="disruption phenotype">
    <text evidence="3">Leads to fluffy and albino colonies, and reduced conidia formation, when all 6 genes ctpA to ctpF are deleted.</text>
</comment>
<comment type="similarity">
    <text evidence="5">Belongs to the mitochondrial carrier (TC 2.A.29) family.</text>
</comment>
<evidence type="ECO:0000255" key="1"/>
<evidence type="ECO:0000255" key="2">
    <source>
        <dbReference type="PROSITE-ProRule" id="PRU00282"/>
    </source>
</evidence>
<evidence type="ECO:0000269" key="3">
    <source>
    </source>
</evidence>
<evidence type="ECO:0000303" key="4">
    <source>
    </source>
</evidence>
<evidence type="ECO:0000305" key="5"/>
<evidence type="ECO:0000305" key="6">
    <source>
    </source>
</evidence>
<organism>
    <name type="scientific">Aspergillus niger (strain ATCC 1015 / CBS 113.46 / FGSC A1144 / LSHB Ac4 / NCTC 3858a / NRRL 328 / USDA 3528.7)</name>
    <dbReference type="NCBI Taxonomy" id="380704"/>
    <lineage>
        <taxon>Eukaryota</taxon>
        <taxon>Fungi</taxon>
        <taxon>Dikarya</taxon>
        <taxon>Ascomycota</taxon>
        <taxon>Pezizomycotina</taxon>
        <taxon>Eurotiomycetes</taxon>
        <taxon>Eurotiomycetidae</taxon>
        <taxon>Eurotiales</taxon>
        <taxon>Aspergillaceae</taxon>
        <taxon>Aspergillus</taxon>
        <taxon>Aspergillus subgen. Circumdati</taxon>
    </lineage>
</organism>
<proteinExistence type="inferred from homology"/>
<accession>G3YD89</accession>